<dbReference type="EMBL" id="BX294155">
    <property type="protein sequence ID" value="CAD77687.1"/>
    <property type="molecule type" value="Genomic_DNA"/>
</dbReference>
<dbReference type="RefSeq" id="NP_870610.1">
    <property type="nucleotide sequence ID" value="NC_005027.1"/>
</dbReference>
<dbReference type="RefSeq" id="WP_011123828.1">
    <property type="nucleotide sequence ID" value="NC_005027.1"/>
</dbReference>
<dbReference type="SMR" id="Q7UIC7"/>
<dbReference type="FunCoup" id="Q7UIC7">
    <property type="interactions" value="569"/>
</dbReference>
<dbReference type="STRING" id="243090.RB12623"/>
<dbReference type="EnsemblBacteria" id="CAD77687">
    <property type="protein sequence ID" value="CAD77687"/>
    <property type="gene ID" value="RB12623"/>
</dbReference>
<dbReference type="KEGG" id="rba:RB12623"/>
<dbReference type="PATRIC" id="fig|243090.15.peg.6121"/>
<dbReference type="eggNOG" id="COG0099">
    <property type="taxonomic scope" value="Bacteria"/>
</dbReference>
<dbReference type="HOGENOM" id="CLU_103849_1_2_0"/>
<dbReference type="InParanoid" id="Q7UIC7"/>
<dbReference type="OrthoDB" id="9803610at2"/>
<dbReference type="Proteomes" id="UP000001025">
    <property type="component" value="Chromosome"/>
</dbReference>
<dbReference type="GO" id="GO:0005829">
    <property type="term" value="C:cytosol"/>
    <property type="evidence" value="ECO:0000318"/>
    <property type="project" value="GO_Central"/>
</dbReference>
<dbReference type="GO" id="GO:0015935">
    <property type="term" value="C:small ribosomal subunit"/>
    <property type="evidence" value="ECO:0000318"/>
    <property type="project" value="GO_Central"/>
</dbReference>
<dbReference type="GO" id="GO:0019843">
    <property type="term" value="F:rRNA binding"/>
    <property type="evidence" value="ECO:0007669"/>
    <property type="project" value="UniProtKB-UniRule"/>
</dbReference>
<dbReference type="GO" id="GO:0003735">
    <property type="term" value="F:structural constituent of ribosome"/>
    <property type="evidence" value="ECO:0007669"/>
    <property type="project" value="InterPro"/>
</dbReference>
<dbReference type="GO" id="GO:0000049">
    <property type="term" value="F:tRNA binding"/>
    <property type="evidence" value="ECO:0007669"/>
    <property type="project" value="UniProtKB-UniRule"/>
</dbReference>
<dbReference type="GO" id="GO:0006412">
    <property type="term" value="P:translation"/>
    <property type="evidence" value="ECO:0007669"/>
    <property type="project" value="UniProtKB-UniRule"/>
</dbReference>
<dbReference type="FunFam" id="1.10.8.50:FF:000001">
    <property type="entry name" value="30S ribosomal protein S13"/>
    <property type="match status" value="1"/>
</dbReference>
<dbReference type="FunFam" id="4.10.910.10:FF:000001">
    <property type="entry name" value="30S ribosomal protein S13"/>
    <property type="match status" value="1"/>
</dbReference>
<dbReference type="Gene3D" id="1.10.8.50">
    <property type="match status" value="1"/>
</dbReference>
<dbReference type="Gene3D" id="4.10.910.10">
    <property type="entry name" value="30s ribosomal protein s13, domain 2"/>
    <property type="match status" value="1"/>
</dbReference>
<dbReference type="HAMAP" id="MF_01315">
    <property type="entry name" value="Ribosomal_uS13"/>
    <property type="match status" value="1"/>
</dbReference>
<dbReference type="InterPro" id="IPR027437">
    <property type="entry name" value="Rbsml_uS13_C"/>
</dbReference>
<dbReference type="InterPro" id="IPR001892">
    <property type="entry name" value="Ribosomal_uS13"/>
</dbReference>
<dbReference type="InterPro" id="IPR010979">
    <property type="entry name" value="Ribosomal_uS13-like_H2TH"/>
</dbReference>
<dbReference type="InterPro" id="IPR019980">
    <property type="entry name" value="Ribosomal_uS13_bac-type"/>
</dbReference>
<dbReference type="InterPro" id="IPR018269">
    <property type="entry name" value="Ribosomal_uS13_CS"/>
</dbReference>
<dbReference type="NCBIfam" id="TIGR03631">
    <property type="entry name" value="uS13_bact"/>
    <property type="match status" value="1"/>
</dbReference>
<dbReference type="PANTHER" id="PTHR10871">
    <property type="entry name" value="30S RIBOSOMAL PROTEIN S13/40S RIBOSOMAL PROTEIN S18"/>
    <property type="match status" value="1"/>
</dbReference>
<dbReference type="PANTHER" id="PTHR10871:SF1">
    <property type="entry name" value="SMALL RIBOSOMAL SUBUNIT PROTEIN US13M"/>
    <property type="match status" value="1"/>
</dbReference>
<dbReference type="Pfam" id="PF00416">
    <property type="entry name" value="Ribosomal_S13"/>
    <property type="match status" value="1"/>
</dbReference>
<dbReference type="PIRSF" id="PIRSF002134">
    <property type="entry name" value="Ribosomal_S13"/>
    <property type="match status" value="1"/>
</dbReference>
<dbReference type="SUPFAM" id="SSF46946">
    <property type="entry name" value="S13-like H2TH domain"/>
    <property type="match status" value="1"/>
</dbReference>
<dbReference type="PROSITE" id="PS00646">
    <property type="entry name" value="RIBOSOMAL_S13_1"/>
    <property type="match status" value="1"/>
</dbReference>
<dbReference type="PROSITE" id="PS50159">
    <property type="entry name" value="RIBOSOMAL_S13_2"/>
    <property type="match status" value="1"/>
</dbReference>
<feature type="chain" id="PRO_0000230558" description="Small ribosomal subunit protein uS13">
    <location>
        <begin position="1"/>
        <end position="127"/>
    </location>
</feature>
<feature type="region of interest" description="Disordered" evidence="2">
    <location>
        <begin position="97"/>
        <end position="127"/>
    </location>
</feature>
<feature type="compositionally biased region" description="Basic residues" evidence="2">
    <location>
        <begin position="101"/>
        <end position="118"/>
    </location>
</feature>
<organism>
    <name type="scientific">Rhodopirellula baltica (strain DSM 10527 / NCIMB 13988 / SH1)</name>
    <dbReference type="NCBI Taxonomy" id="243090"/>
    <lineage>
        <taxon>Bacteria</taxon>
        <taxon>Pseudomonadati</taxon>
        <taxon>Planctomycetota</taxon>
        <taxon>Planctomycetia</taxon>
        <taxon>Pirellulales</taxon>
        <taxon>Pirellulaceae</taxon>
        <taxon>Rhodopirellula</taxon>
    </lineage>
</organism>
<sequence length="127" mass="14481">MPRLMGVDIPNDKQIQYSLTYLYGLGLYRAREVCEKLGIDPTSPASDISDEDVGRIAALLERDYLVEGPLRRQVTQNISRMREIKSYRGIRHRVSLPVRGQRTKTNARTRKGPRKTVAGKKGVKDLR</sequence>
<comment type="function">
    <text evidence="1">Located at the top of the head of the 30S subunit, it contacts several helices of the 16S rRNA. In the 70S ribosome it contacts the 23S rRNA (bridge B1a) and protein L5 of the 50S subunit (bridge B1b), connecting the 2 subunits; these bridges are implicated in subunit movement. Contacts the tRNAs in the A and P-sites.</text>
</comment>
<comment type="subunit">
    <text evidence="1">Part of the 30S ribosomal subunit. Forms a loose heterodimer with protein S19. Forms two bridges to the 50S subunit in the 70S ribosome.</text>
</comment>
<comment type="similarity">
    <text evidence="1">Belongs to the universal ribosomal protein uS13 family.</text>
</comment>
<name>RS13_RHOBA</name>
<reference key="1">
    <citation type="journal article" date="2003" name="Proc. Natl. Acad. Sci. U.S.A.">
        <title>Complete genome sequence of the marine planctomycete Pirellula sp. strain 1.</title>
        <authorList>
            <person name="Gloeckner F.O."/>
            <person name="Kube M."/>
            <person name="Bauer M."/>
            <person name="Teeling H."/>
            <person name="Lombardot T."/>
            <person name="Ludwig W."/>
            <person name="Gade D."/>
            <person name="Beck A."/>
            <person name="Borzym K."/>
            <person name="Heitmann K."/>
            <person name="Rabus R."/>
            <person name="Schlesner H."/>
            <person name="Amann R."/>
            <person name="Reinhardt R."/>
        </authorList>
    </citation>
    <scope>NUCLEOTIDE SEQUENCE [LARGE SCALE GENOMIC DNA]</scope>
    <source>
        <strain>DSM 10527 / NCIMB 13988 / SH1</strain>
    </source>
</reference>
<proteinExistence type="inferred from homology"/>
<evidence type="ECO:0000255" key="1">
    <source>
        <dbReference type="HAMAP-Rule" id="MF_01315"/>
    </source>
</evidence>
<evidence type="ECO:0000256" key="2">
    <source>
        <dbReference type="SAM" id="MobiDB-lite"/>
    </source>
</evidence>
<evidence type="ECO:0000305" key="3"/>
<keyword id="KW-1185">Reference proteome</keyword>
<keyword id="KW-0687">Ribonucleoprotein</keyword>
<keyword id="KW-0689">Ribosomal protein</keyword>
<keyword id="KW-0694">RNA-binding</keyword>
<keyword id="KW-0699">rRNA-binding</keyword>
<keyword id="KW-0820">tRNA-binding</keyword>
<accession>Q7UIC7</accession>
<protein>
    <recommendedName>
        <fullName evidence="1">Small ribosomal subunit protein uS13</fullName>
    </recommendedName>
    <alternativeName>
        <fullName evidence="3">30S ribosomal protein S13</fullName>
    </alternativeName>
</protein>
<gene>
    <name evidence="1" type="primary">rpsM</name>
    <name type="ordered locus">RB12623</name>
</gene>